<evidence type="ECO:0000255" key="1">
    <source>
        <dbReference type="HAMAP-Rule" id="MF_01366"/>
    </source>
</evidence>
<evidence type="ECO:0000305" key="2"/>
<accession>Q12RX8</accession>
<comment type="function">
    <text evidence="1">This protein is one of the early assembly proteins of the 50S ribosomal subunit, although it is not seen to bind rRNA by itself. It is important during the early stages of 50S assembly.</text>
</comment>
<comment type="subunit">
    <text evidence="1">Part of the 50S ribosomal subunit.</text>
</comment>
<comment type="similarity">
    <text evidence="1">Belongs to the universal ribosomal protein uL13 family.</text>
</comment>
<name>RL13_SHEDO</name>
<protein>
    <recommendedName>
        <fullName evidence="1">Large ribosomal subunit protein uL13</fullName>
    </recommendedName>
    <alternativeName>
        <fullName evidence="2">50S ribosomal protein L13</fullName>
    </alternativeName>
</protein>
<gene>
    <name evidence="1" type="primary">rplM</name>
    <name type="ordered locus">Sden_0506</name>
</gene>
<reference key="1">
    <citation type="submission" date="2006-03" db="EMBL/GenBank/DDBJ databases">
        <title>Complete sequence of Shewanella denitrificans OS217.</title>
        <authorList>
            <consortium name="US DOE Joint Genome Institute"/>
            <person name="Copeland A."/>
            <person name="Lucas S."/>
            <person name="Lapidus A."/>
            <person name="Barry K."/>
            <person name="Detter J.C."/>
            <person name="Glavina del Rio T."/>
            <person name="Hammon N."/>
            <person name="Israni S."/>
            <person name="Dalin E."/>
            <person name="Tice H."/>
            <person name="Pitluck S."/>
            <person name="Brettin T."/>
            <person name="Bruce D."/>
            <person name="Han C."/>
            <person name="Tapia R."/>
            <person name="Gilna P."/>
            <person name="Kiss H."/>
            <person name="Schmutz J."/>
            <person name="Larimer F."/>
            <person name="Land M."/>
            <person name="Hauser L."/>
            <person name="Kyrpides N."/>
            <person name="Lykidis A."/>
            <person name="Richardson P."/>
        </authorList>
    </citation>
    <scope>NUCLEOTIDE SEQUENCE [LARGE SCALE GENOMIC DNA]</scope>
    <source>
        <strain>OS217 / ATCC BAA-1090 / DSM 15013</strain>
    </source>
</reference>
<organism>
    <name type="scientific">Shewanella denitrificans (strain OS217 / ATCC BAA-1090 / DSM 15013)</name>
    <dbReference type="NCBI Taxonomy" id="318161"/>
    <lineage>
        <taxon>Bacteria</taxon>
        <taxon>Pseudomonadati</taxon>
        <taxon>Pseudomonadota</taxon>
        <taxon>Gammaproteobacteria</taxon>
        <taxon>Alteromonadales</taxon>
        <taxon>Shewanellaceae</taxon>
        <taxon>Shewanella</taxon>
    </lineage>
</organism>
<sequence>MKTFTATPETVTRDWFVVDAEGKTLGRIATEIAIRLRGKHKPEYTPHVDTGDYIIVINAEKVTVTGNKAAGKIYYSHSGFPGGIKQISFEKLQAQKPEMIIEKAVKGMLPKGPLGRAMFRKLKVYAGVEHNHAAQQPQVLDI</sequence>
<dbReference type="EMBL" id="CP000302">
    <property type="protein sequence ID" value="ABE53798.1"/>
    <property type="molecule type" value="Genomic_DNA"/>
</dbReference>
<dbReference type="RefSeq" id="WP_011494964.1">
    <property type="nucleotide sequence ID" value="NC_007954.1"/>
</dbReference>
<dbReference type="SMR" id="Q12RX8"/>
<dbReference type="STRING" id="318161.Sden_0506"/>
<dbReference type="KEGG" id="sdn:Sden_0506"/>
<dbReference type="eggNOG" id="COG0102">
    <property type="taxonomic scope" value="Bacteria"/>
</dbReference>
<dbReference type="HOGENOM" id="CLU_082184_2_2_6"/>
<dbReference type="OrthoDB" id="9801330at2"/>
<dbReference type="Proteomes" id="UP000001982">
    <property type="component" value="Chromosome"/>
</dbReference>
<dbReference type="GO" id="GO:0022625">
    <property type="term" value="C:cytosolic large ribosomal subunit"/>
    <property type="evidence" value="ECO:0007669"/>
    <property type="project" value="TreeGrafter"/>
</dbReference>
<dbReference type="GO" id="GO:0003729">
    <property type="term" value="F:mRNA binding"/>
    <property type="evidence" value="ECO:0007669"/>
    <property type="project" value="TreeGrafter"/>
</dbReference>
<dbReference type="GO" id="GO:0003735">
    <property type="term" value="F:structural constituent of ribosome"/>
    <property type="evidence" value="ECO:0007669"/>
    <property type="project" value="InterPro"/>
</dbReference>
<dbReference type="GO" id="GO:0017148">
    <property type="term" value="P:negative regulation of translation"/>
    <property type="evidence" value="ECO:0007669"/>
    <property type="project" value="TreeGrafter"/>
</dbReference>
<dbReference type="GO" id="GO:0006412">
    <property type="term" value="P:translation"/>
    <property type="evidence" value="ECO:0007669"/>
    <property type="project" value="UniProtKB-UniRule"/>
</dbReference>
<dbReference type="CDD" id="cd00392">
    <property type="entry name" value="Ribosomal_L13"/>
    <property type="match status" value="1"/>
</dbReference>
<dbReference type="FunFam" id="3.90.1180.10:FF:000001">
    <property type="entry name" value="50S ribosomal protein L13"/>
    <property type="match status" value="1"/>
</dbReference>
<dbReference type="Gene3D" id="3.90.1180.10">
    <property type="entry name" value="Ribosomal protein L13"/>
    <property type="match status" value="1"/>
</dbReference>
<dbReference type="HAMAP" id="MF_01366">
    <property type="entry name" value="Ribosomal_uL13"/>
    <property type="match status" value="1"/>
</dbReference>
<dbReference type="InterPro" id="IPR005822">
    <property type="entry name" value="Ribosomal_uL13"/>
</dbReference>
<dbReference type="InterPro" id="IPR005823">
    <property type="entry name" value="Ribosomal_uL13_bac-type"/>
</dbReference>
<dbReference type="InterPro" id="IPR023563">
    <property type="entry name" value="Ribosomal_uL13_CS"/>
</dbReference>
<dbReference type="InterPro" id="IPR036899">
    <property type="entry name" value="Ribosomal_uL13_sf"/>
</dbReference>
<dbReference type="NCBIfam" id="TIGR01066">
    <property type="entry name" value="rplM_bact"/>
    <property type="match status" value="1"/>
</dbReference>
<dbReference type="PANTHER" id="PTHR11545:SF2">
    <property type="entry name" value="LARGE RIBOSOMAL SUBUNIT PROTEIN UL13M"/>
    <property type="match status" value="1"/>
</dbReference>
<dbReference type="PANTHER" id="PTHR11545">
    <property type="entry name" value="RIBOSOMAL PROTEIN L13"/>
    <property type="match status" value="1"/>
</dbReference>
<dbReference type="Pfam" id="PF00572">
    <property type="entry name" value="Ribosomal_L13"/>
    <property type="match status" value="1"/>
</dbReference>
<dbReference type="PIRSF" id="PIRSF002181">
    <property type="entry name" value="Ribosomal_L13"/>
    <property type="match status" value="1"/>
</dbReference>
<dbReference type="SUPFAM" id="SSF52161">
    <property type="entry name" value="Ribosomal protein L13"/>
    <property type="match status" value="1"/>
</dbReference>
<dbReference type="PROSITE" id="PS00783">
    <property type="entry name" value="RIBOSOMAL_L13"/>
    <property type="match status" value="1"/>
</dbReference>
<feature type="chain" id="PRO_0000261793" description="Large ribosomal subunit protein uL13">
    <location>
        <begin position="1"/>
        <end position="142"/>
    </location>
</feature>
<keyword id="KW-1185">Reference proteome</keyword>
<keyword id="KW-0687">Ribonucleoprotein</keyword>
<keyword id="KW-0689">Ribosomal protein</keyword>
<proteinExistence type="inferred from homology"/>